<dbReference type="EC" id="7.1.1.-" evidence="1"/>
<dbReference type="EMBL" id="AJ879453">
    <property type="protein sequence ID" value="CAI53799.1"/>
    <property type="molecule type" value="Genomic_DNA"/>
</dbReference>
<dbReference type="RefSeq" id="YP_319770.1">
    <property type="nucleotide sequence ID" value="NC_007407.1"/>
</dbReference>
<dbReference type="SMR" id="Q3V529"/>
<dbReference type="GeneID" id="3677389"/>
<dbReference type="GO" id="GO:0009535">
    <property type="term" value="C:chloroplast thylakoid membrane"/>
    <property type="evidence" value="ECO:0007669"/>
    <property type="project" value="UniProtKB-SubCell"/>
</dbReference>
<dbReference type="GO" id="GO:0030964">
    <property type="term" value="C:NADH dehydrogenase complex"/>
    <property type="evidence" value="ECO:0007669"/>
    <property type="project" value="TreeGrafter"/>
</dbReference>
<dbReference type="GO" id="GO:0008137">
    <property type="term" value="F:NADH dehydrogenase (ubiquinone) activity"/>
    <property type="evidence" value="ECO:0007669"/>
    <property type="project" value="InterPro"/>
</dbReference>
<dbReference type="GO" id="GO:0048038">
    <property type="term" value="F:quinone binding"/>
    <property type="evidence" value="ECO:0007669"/>
    <property type="project" value="UniProtKB-KW"/>
</dbReference>
<dbReference type="GO" id="GO:0019684">
    <property type="term" value="P:photosynthesis, light reaction"/>
    <property type="evidence" value="ECO:0007669"/>
    <property type="project" value="UniProtKB-UniRule"/>
</dbReference>
<dbReference type="FunFam" id="1.20.58.1610:FF:000001">
    <property type="entry name" value="NAD(P)H-quinone oxidoreductase subunit 3, chloroplastic"/>
    <property type="match status" value="1"/>
</dbReference>
<dbReference type="Gene3D" id="1.20.58.1610">
    <property type="entry name" value="NADH:ubiquinone/plastoquinone oxidoreductase, chain 3"/>
    <property type="match status" value="1"/>
</dbReference>
<dbReference type="HAMAP" id="MF_01394">
    <property type="entry name" value="NDH1_NuoA"/>
    <property type="match status" value="1"/>
</dbReference>
<dbReference type="InterPro" id="IPR023043">
    <property type="entry name" value="NAD(P)H_OxRDtase_bac/plastid"/>
</dbReference>
<dbReference type="InterPro" id="IPR000440">
    <property type="entry name" value="NADH_UbQ/plastoQ_OxRdtase_su3"/>
</dbReference>
<dbReference type="InterPro" id="IPR038430">
    <property type="entry name" value="NDAH_ubi_oxred_su3_sf"/>
</dbReference>
<dbReference type="PANTHER" id="PTHR11058">
    <property type="entry name" value="NADH-UBIQUINONE OXIDOREDUCTASE CHAIN 3"/>
    <property type="match status" value="1"/>
</dbReference>
<dbReference type="PANTHER" id="PTHR11058:SF9">
    <property type="entry name" value="NADH-UBIQUINONE OXIDOREDUCTASE CHAIN 3"/>
    <property type="match status" value="1"/>
</dbReference>
<dbReference type="Pfam" id="PF00507">
    <property type="entry name" value="Oxidored_q4"/>
    <property type="match status" value="1"/>
</dbReference>
<geneLocation type="chloroplast"/>
<evidence type="ECO:0000255" key="1">
    <source>
        <dbReference type="HAMAP-Rule" id="MF_01394"/>
    </source>
</evidence>
<proteinExistence type="inferred from homology"/>
<feature type="chain" id="PRO_0000362802" description="NAD(P)H-quinone oxidoreductase subunit 3, chloroplastic">
    <location>
        <begin position="1"/>
        <end position="120"/>
    </location>
</feature>
<feature type="transmembrane region" description="Helical" evidence="1">
    <location>
        <begin position="9"/>
        <end position="29"/>
    </location>
</feature>
<feature type="transmembrane region" description="Helical" evidence="1">
    <location>
        <begin position="64"/>
        <end position="84"/>
    </location>
</feature>
<feature type="transmembrane region" description="Helical" evidence="1">
    <location>
        <begin position="88"/>
        <end position="108"/>
    </location>
</feature>
<sequence>MFLLHEYDIFWAFLLISSVIPILAFLISGVLAPTREGPEKLSSYESGIEPIGDAWVQFRIRYYMFALVFVVFDVETVFLYPWAMSFDVLGVSVFLEALIFVLILIVGSVYAWRKGALEWS</sequence>
<name>NU3C_ACOCL</name>
<reference key="1">
    <citation type="journal article" date="2005" name="Mol. Biol. Evol.">
        <title>Analysis of Acorus calamus chloroplast genome and its phylogenetic implications.</title>
        <authorList>
            <person name="Goremykin V.V."/>
            <person name="Holland B."/>
            <person name="Hirsch-Ernst K.I."/>
            <person name="Hellwig F.H."/>
        </authorList>
    </citation>
    <scope>NUCLEOTIDE SEQUENCE [LARGE SCALE GENOMIC DNA]</scope>
</reference>
<keyword id="KW-0150">Chloroplast</keyword>
<keyword id="KW-0472">Membrane</keyword>
<keyword id="KW-0520">NAD</keyword>
<keyword id="KW-0521">NADP</keyword>
<keyword id="KW-0934">Plastid</keyword>
<keyword id="KW-0618">Plastoquinone</keyword>
<keyword id="KW-0874">Quinone</keyword>
<keyword id="KW-0793">Thylakoid</keyword>
<keyword id="KW-1278">Translocase</keyword>
<keyword id="KW-0812">Transmembrane</keyword>
<keyword id="KW-1133">Transmembrane helix</keyword>
<keyword id="KW-0813">Transport</keyword>
<gene>
    <name evidence="1" type="primary">ndhC</name>
</gene>
<comment type="function">
    <text evidence="1">NDH shuttles electrons from NAD(P)H:plastoquinone, via FMN and iron-sulfur (Fe-S) centers, to quinones in the photosynthetic chain and possibly in a chloroplast respiratory chain. The immediate electron acceptor for the enzyme in this species is believed to be plastoquinone. Couples the redox reaction to proton translocation, and thus conserves the redox energy in a proton gradient.</text>
</comment>
<comment type="catalytic activity">
    <reaction evidence="1">
        <text>a plastoquinone + NADH + (n+1) H(+)(in) = a plastoquinol + NAD(+) + n H(+)(out)</text>
        <dbReference type="Rhea" id="RHEA:42608"/>
        <dbReference type="Rhea" id="RHEA-COMP:9561"/>
        <dbReference type="Rhea" id="RHEA-COMP:9562"/>
        <dbReference type="ChEBI" id="CHEBI:15378"/>
        <dbReference type="ChEBI" id="CHEBI:17757"/>
        <dbReference type="ChEBI" id="CHEBI:57540"/>
        <dbReference type="ChEBI" id="CHEBI:57945"/>
        <dbReference type="ChEBI" id="CHEBI:62192"/>
    </reaction>
</comment>
<comment type="catalytic activity">
    <reaction evidence="1">
        <text>a plastoquinone + NADPH + (n+1) H(+)(in) = a plastoquinol + NADP(+) + n H(+)(out)</text>
        <dbReference type="Rhea" id="RHEA:42612"/>
        <dbReference type="Rhea" id="RHEA-COMP:9561"/>
        <dbReference type="Rhea" id="RHEA-COMP:9562"/>
        <dbReference type="ChEBI" id="CHEBI:15378"/>
        <dbReference type="ChEBI" id="CHEBI:17757"/>
        <dbReference type="ChEBI" id="CHEBI:57783"/>
        <dbReference type="ChEBI" id="CHEBI:58349"/>
        <dbReference type="ChEBI" id="CHEBI:62192"/>
    </reaction>
</comment>
<comment type="subunit">
    <text evidence="1">NDH is composed of at least 16 different subunits, 5 of which are encoded in the nucleus.</text>
</comment>
<comment type="subcellular location">
    <subcellularLocation>
        <location evidence="1">Plastid</location>
        <location evidence="1">Chloroplast thylakoid membrane</location>
        <topology evidence="1">Multi-pass membrane protein</topology>
    </subcellularLocation>
</comment>
<comment type="similarity">
    <text evidence="1">Belongs to the complex I subunit 3 family.</text>
</comment>
<protein>
    <recommendedName>
        <fullName evidence="1">NAD(P)H-quinone oxidoreductase subunit 3, chloroplastic</fullName>
        <ecNumber evidence="1">7.1.1.-</ecNumber>
    </recommendedName>
    <alternativeName>
        <fullName evidence="1">NAD(P)H dehydrogenase subunit 3</fullName>
    </alternativeName>
    <alternativeName>
        <fullName evidence="1">NADH-plastoquinone oxidoreductase subunit 3</fullName>
    </alternativeName>
</protein>
<organism>
    <name type="scientific">Acorus calamus</name>
    <name type="common">Sweet flag</name>
    <dbReference type="NCBI Taxonomy" id="4465"/>
    <lineage>
        <taxon>Eukaryota</taxon>
        <taxon>Viridiplantae</taxon>
        <taxon>Streptophyta</taxon>
        <taxon>Embryophyta</taxon>
        <taxon>Tracheophyta</taxon>
        <taxon>Spermatophyta</taxon>
        <taxon>Magnoliopsida</taxon>
        <taxon>Liliopsida</taxon>
        <taxon>Acoraceae</taxon>
        <taxon>Acorus</taxon>
    </lineage>
</organism>
<accession>Q3V529</accession>